<comment type="function">
    <text evidence="2 3 4">Catalyzes the irreversible transamination of the L-tryptophan metabolite L-kynurenine to form kynurenic acid (KA), an intermediate in the tryptophan catabolic pathway which is also a broad spectrum antagonist of the three ionotropic excitatory amino acid receptors among others (PubMed:19338303, PubMed:28097769). Also metabolizes the cysteine conjugates of certain halogenated alkenes and alkanes to form reactive metabolites (PubMed:7883047). Catalyzes the beta-elimination of S-conjugates and Se-conjugates of L-(seleno)cysteine, resulting in the cleavage of the C-S or C-Se bond (PubMed:7883047).</text>
</comment>
<comment type="catalytic activity">
    <reaction evidence="2 3">
        <text>L-kynurenine + 2-oxoglutarate = kynurenate + L-glutamate + H2O</text>
        <dbReference type="Rhea" id="RHEA:65560"/>
        <dbReference type="ChEBI" id="CHEBI:15377"/>
        <dbReference type="ChEBI" id="CHEBI:16810"/>
        <dbReference type="ChEBI" id="CHEBI:29985"/>
        <dbReference type="ChEBI" id="CHEBI:57959"/>
        <dbReference type="ChEBI" id="CHEBI:58454"/>
        <dbReference type="EC" id="2.6.1.7"/>
    </reaction>
    <physiologicalReaction direction="left-to-right" evidence="7">
        <dbReference type="Rhea" id="RHEA:65561"/>
    </physiologicalReaction>
</comment>
<comment type="catalytic activity">
    <reaction evidence="4">
        <text>3-phenylpyruvate + L-glutamine = 2-oxoglutaramate + L-phenylalanine</text>
        <dbReference type="Rhea" id="RHEA:17593"/>
        <dbReference type="ChEBI" id="CHEBI:16769"/>
        <dbReference type="ChEBI" id="CHEBI:18005"/>
        <dbReference type="ChEBI" id="CHEBI:58095"/>
        <dbReference type="ChEBI" id="CHEBI:58359"/>
        <dbReference type="EC" id="2.6.1.64"/>
    </reaction>
</comment>
<comment type="catalytic activity">
    <reaction evidence="4">
        <text>an S-substituted L-cysteine + H2O = a thiol + pyruvate + NH4(+)</text>
        <dbReference type="Rhea" id="RHEA:18121"/>
        <dbReference type="ChEBI" id="CHEBI:15361"/>
        <dbReference type="ChEBI" id="CHEBI:15377"/>
        <dbReference type="ChEBI" id="CHEBI:28938"/>
        <dbReference type="ChEBI" id="CHEBI:29256"/>
        <dbReference type="ChEBI" id="CHEBI:58717"/>
        <dbReference type="EC" id="4.4.1.13"/>
    </reaction>
    <physiologicalReaction direction="left-to-right" evidence="8">
        <dbReference type="Rhea" id="RHEA:18122"/>
    </physiologicalReaction>
</comment>
<comment type="cofactor">
    <cofactor evidence="1">
        <name>pyridoxal 5'-phosphate</name>
        <dbReference type="ChEBI" id="CHEBI:597326"/>
    </cofactor>
</comment>
<comment type="activity regulation">
    <text evidence="2">Inhibited by tryptophan, indole-3-pyruvic acid, 3-indolepropionic acid, DL-indole-3-lactic acid, indole-3-acetic acid (IAC), amino-oxyacetate (AOAA), aminooxy-phenylpropionic acid (AOPP) and Tris.</text>
</comment>
<comment type="pathway">
    <text evidence="2 3">Amino-acid degradation; L-kynurenine degradation; kynurenate from L-kynurenine: step 1/2.</text>
</comment>
<comment type="subunit">
    <text evidence="1 2 3">Homodimer.</text>
</comment>
<comment type="interaction">
    <interactant intactId="EBI-10238309">
        <id>Q16773</id>
    </interactant>
    <interactant intactId="EBI-358993">
        <id>Q15645</id>
        <label>TRIP13</label>
    </interactant>
    <organismsDiffer>false</organismsDiffer>
    <experiments>3</experiments>
</comment>
<comment type="interaction">
    <interactant intactId="EBI-10238309">
        <id>Q16773</id>
    </interactant>
    <interactant intactId="EBI-2107455">
        <id>Q08AM6</id>
        <label>VAC14</label>
    </interactant>
    <organismsDiffer>false</organismsDiffer>
    <experiments>4</experiments>
</comment>
<comment type="subcellular location">
    <subcellularLocation>
        <location evidence="4">Cytoplasm</location>
        <location evidence="4">Cytosol</location>
    </subcellularLocation>
</comment>
<comment type="alternative products">
    <event type="alternative splicing"/>
    <isoform>
        <id>Q16773-1</id>
        <name>1</name>
        <sequence type="displayed"/>
    </isoform>
    <isoform>
        <id>Q16773-2</id>
        <name>2</name>
        <sequence type="described" ref="VSP_009875"/>
    </isoform>
    <isoform>
        <id>Q16773-3</id>
        <name>3</name>
        <sequence type="described" ref="VSP_009876 VSP_009877"/>
    </isoform>
</comment>
<comment type="similarity">
    <text evidence="6">Belongs to the class-I pyridoxal-phosphate-dependent aminotransferase family.</text>
</comment>
<feature type="chain" id="PRO_0000123942" description="Kynurenine--oxoglutarate transaminase 1">
    <location>
        <begin position="1"/>
        <end position="422"/>
    </location>
</feature>
<feature type="binding site" evidence="1 11">
    <location>
        <position position="36"/>
    </location>
    <ligand>
        <name>substrate</name>
    </ligand>
</feature>
<feature type="binding site" evidence="1 11">
    <location>
        <position position="185"/>
    </location>
    <ligand>
        <name>substrate</name>
    </ligand>
</feature>
<feature type="binding site" evidence="1 11">
    <location>
        <position position="398"/>
    </location>
    <ligand>
        <name>substrate</name>
    </ligand>
</feature>
<feature type="modified residue" description="N6-(pyridoxal phosphate)lysine" evidence="1 10 11">
    <location>
        <position position="247"/>
    </location>
</feature>
<feature type="splice variant" id="VSP_009875" description="In isoform 2." evidence="5">
    <location>
        <begin position="68"/>
        <end position="117"/>
    </location>
</feature>
<feature type="splice variant" id="VSP_009876" description="In isoform 3." evidence="5">
    <original>ASLPGMWERTLTIGSAGKTFS</original>
    <variation>VSAAVLFGLGQPASLACGNGP</variation>
    <location>
        <begin position="230"/>
        <end position="250"/>
    </location>
</feature>
<feature type="splice variant" id="VSP_009877" description="In isoform 3." evidence="5">
    <location>
        <begin position="251"/>
        <end position="422"/>
    </location>
</feature>
<feature type="sequence conflict" description="In Ref. 3; AAH33685." evidence="6" ref="3">
    <original>L</original>
    <variation>LWP</variation>
    <location>
        <position position="422"/>
    </location>
</feature>
<feature type="helix" evidence="20">
    <location>
        <begin position="8"/>
        <end position="10"/>
    </location>
</feature>
<feature type="helix" evidence="20">
    <location>
        <begin position="18"/>
        <end position="26"/>
    </location>
</feature>
<feature type="helix" evidence="20">
    <location>
        <begin position="44"/>
        <end position="55"/>
    </location>
</feature>
<feature type="helix" evidence="20">
    <location>
        <begin position="58"/>
        <end position="61"/>
    </location>
</feature>
<feature type="helix" evidence="20">
    <location>
        <begin position="70"/>
        <end position="84"/>
    </location>
</feature>
<feature type="turn" evidence="20">
    <location>
        <begin position="90"/>
        <end position="92"/>
    </location>
</feature>
<feature type="strand" evidence="20">
    <location>
        <begin position="93"/>
        <end position="98"/>
    </location>
</feature>
<feature type="helix" evidence="20">
    <location>
        <begin position="99"/>
        <end position="111"/>
    </location>
</feature>
<feature type="strand" evidence="20">
    <location>
        <begin position="117"/>
        <end position="123"/>
    </location>
</feature>
<feature type="helix" evidence="20">
    <location>
        <begin position="128"/>
        <end position="134"/>
    </location>
</feature>
<feature type="strand" evidence="20">
    <location>
        <begin position="138"/>
        <end position="143"/>
    </location>
</feature>
<feature type="strand" evidence="19">
    <location>
        <begin position="151"/>
        <end position="153"/>
    </location>
</feature>
<feature type="strand" evidence="18">
    <location>
        <begin position="154"/>
        <end position="156"/>
    </location>
</feature>
<feature type="helix" evidence="20">
    <location>
        <begin position="157"/>
        <end position="159"/>
    </location>
</feature>
<feature type="helix" evidence="20">
    <location>
        <begin position="164"/>
        <end position="170"/>
    </location>
</feature>
<feature type="strand" evidence="20">
    <location>
        <begin position="175"/>
        <end position="183"/>
    </location>
</feature>
<feature type="turn" evidence="20">
    <location>
        <begin position="185"/>
        <end position="187"/>
    </location>
</feature>
<feature type="helix" evidence="20">
    <location>
        <begin position="193"/>
        <end position="206"/>
    </location>
</feature>
<feature type="strand" evidence="20">
    <location>
        <begin position="209"/>
        <end position="213"/>
    </location>
</feature>
<feature type="turn" evidence="20">
    <location>
        <begin position="215"/>
        <end position="218"/>
    </location>
</feature>
<feature type="helix" evidence="20">
    <location>
        <begin position="229"/>
        <end position="231"/>
    </location>
</feature>
<feature type="turn" evidence="20">
    <location>
        <begin position="233"/>
        <end position="235"/>
    </location>
</feature>
<feature type="helix" evidence="20">
    <location>
        <begin position="236"/>
        <end position="238"/>
    </location>
</feature>
<feature type="strand" evidence="20">
    <location>
        <begin position="239"/>
        <end position="244"/>
    </location>
</feature>
<feature type="helix" evidence="21">
    <location>
        <begin position="245"/>
        <end position="248"/>
    </location>
</feature>
<feature type="helix" evidence="20">
    <location>
        <begin position="252"/>
        <end position="254"/>
    </location>
</feature>
<feature type="strand" evidence="20">
    <location>
        <begin position="257"/>
        <end position="260"/>
    </location>
</feature>
<feature type="helix" evidence="20">
    <location>
        <begin position="263"/>
        <end position="274"/>
    </location>
</feature>
<feature type="turn" evidence="20">
    <location>
        <begin position="275"/>
        <end position="277"/>
    </location>
</feature>
<feature type="helix" evidence="20">
    <location>
        <begin position="282"/>
        <end position="297"/>
    </location>
</feature>
<feature type="turn" evidence="20">
    <location>
        <begin position="298"/>
        <end position="300"/>
    </location>
</feature>
<feature type="helix" evidence="20">
    <location>
        <begin position="305"/>
        <end position="325"/>
    </location>
</feature>
<feature type="turn" evidence="20">
    <location>
        <begin position="326"/>
        <end position="328"/>
    </location>
</feature>
<feature type="strand" evidence="20">
    <location>
        <begin position="330"/>
        <end position="333"/>
    </location>
</feature>
<feature type="strand" evidence="20">
    <location>
        <begin position="335"/>
        <end position="343"/>
    </location>
</feature>
<feature type="helix" evidence="20">
    <location>
        <begin position="345"/>
        <end position="350"/>
    </location>
</feature>
<feature type="helix" evidence="20">
    <location>
        <begin position="362"/>
        <end position="374"/>
    </location>
</feature>
<feature type="helix" evidence="20">
    <location>
        <begin position="381"/>
        <end position="384"/>
    </location>
</feature>
<feature type="helix" evidence="20">
    <location>
        <begin position="387"/>
        <end position="390"/>
    </location>
</feature>
<feature type="turn" evidence="21">
    <location>
        <begin position="391"/>
        <end position="393"/>
    </location>
</feature>
<feature type="strand" evidence="20">
    <location>
        <begin position="395"/>
        <end position="400"/>
    </location>
</feature>
<feature type="helix" evidence="20">
    <location>
        <begin position="405"/>
        <end position="420"/>
    </location>
</feature>
<reference key="1">
    <citation type="journal article" date="1995" name="FEBS Lett.">
        <title>Molecular cloning and expression of a cDNA for human kidney cysteine conjugate beta-lyase.</title>
        <authorList>
            <person name="Perry S."/>
            <person name="Harries H."/>
            <person name="Scholfield C."/>
            <person name="Lock E."/>
            <person name="King L."/>
            <person name="Gibson G."/>
            <person name="Goldfarb P."/>
        </authorList>
    </citation>
    <scope>NUCLEOTIDE SEQUENCE [MRNA] (ISOFORM 1)</scope>
    <scope>FUNCTION</scope>
    <scope>CATALYTIC ACTIVITY</scope>
    <scope>SUBCELLULAR LOCATION</scope>
    <source>
        <tissue>Kidney</tissue>
    </source>
</reference>
<reference key="2">
    <citation type="journal article" date="2004" name="Nature">
        <title>DNA sequence and analysis of human chromosome 9.</title>
        <authorList>
            <person name="Humphray S.J."/>
            <person name="Oliver K."/>
            <person name="Hunt A.R."/>
            <person name="Plumb R.W."/>
            <person name="Loveland J.E."/>
            <person name="Howe K.L."/>
            <person name="Andrews T.D."/>
            <person name="Searle S."/>
            <person name="Hunt S.E."/>
            <person name="Scott C.E."/>
            <person name="Jones M.C."/>
            <person name="Ainscough R."/>
            <person name="Almeida J.P."/>
            <person name="Ambrose K.D."/>
            <person name="Ashwell R.I.S."/>
            <person name="Babbage A.K."/>
            <person name="Babbage S."/>
            <person name="Bagguley C.L."/>
            <person name="Bailey J."/>
            <person name="Banerjee R."/>
            <person name="Barker D.J."/>
            <person name="Barlow K.F."/>
            <person name="Bates K."/>
            <person name="Beasley H."/>
            <person name="Beasley O."/>
            <person name="Bird C.P."/>
            <person name="Bray-Allen S."/>
            <person name="Brown A.J."/>
            <person name="Brown J.Y."/>
            <person name="Burford D."/>
            <person name="Burrill W."/>
            <person name="Burton J."/>
            <person name="Carder C."/>
            <person name="Carter N.P."/>
            <person name="Chapman J.C."/>
            <person name="Chen Y."/>
            <person name="Clarke G."/>
            <person name="Clark S.Y."/>
            <person name="Clee C.M."/>
            <person name="Clegg S."/>
            <person name="Collier R.E."/>
            <person name="Corby N."/>
            <person name="Crosier M."/>
            <person name="Cummings A.T."/>
            <person name="Davies J."/>
            <person name="Dhami P."/>
            <person name="Dunn M."/>
            <person name="Dutta I."/>
            <person name="Dyer L.W."/>
            <person name="Earthrowl M.E."/>
            <person name="Faulkner L."/>
            <person name="Fleming C.J."/>
            <person name="Frankish A."/>
            <person name="Frankland J.A."/>
            <person name="French L."/>
            <person name="Fricker D.G."/>
            <person name="Garner P."/>
            <person name="Garnett J."/>
            <person name="Ghori J."/>
            <person name="Gilbert J.G.R."/>
            <person name="Glison C."/>
            <person name="Grafham D.V."/>
            <person name="Gribble S."/>
            <person name="Griffiths C."/>
            <person name="Griffiths-Jones S."/>
            <person name="Grocock R."/>
            <person name="Guy J."/>
            <person name="Hall R.E."/>
            <person name="Hammond S."/>
            <person name="Harley J.L."/>
            <person name="Harrison E.S.I."/>
            <person name="Hart E.A."/>
            <person name="Heath P.D."/>
            <person name="Henderson C.D."/>
            <person name="Hopkins B.L."/>
            <person name="Howard P.J."/>
            <person name="Howden P.J."/>
            <person name="Huckle E."/>
            <person name="Johnson C."/>
            <person name="Johnson D."/>
            <person name="Joy A.A."/>
            <person name="Kay M."/>
            <person name="Keenan S."/>
            <person name="Kershaw J.K."/>
            <person name="Kimberley A.M."/>
            <person name="King A."/>
            <person name="Knights A."/>
            <person name="Laird G.K."/>
            <person name="Langford C."/>
            <person name="Lawlor S."/>
            <person name="Leongamornlert D.A."/>
            <person name="Leversha M."/>
            <person name="Lloyd C."/>
            <person name="Lloyd D.M."/>
            <person name="Lovell J."/>
            <person name="Martin S."/>
            <person name="Mashreghi-Mohammadi M."/>
            <person name="Matthews L."/>
            <person name="McLaren S."/>
            <person name="McLay K.E."/>
            <person name="McMurray A."/>
            <person name="Milne S."/>
            <person name="Nickerson T."/>
            <person name="Nisbett J."/>
            <person name="Nordsiek G."/>
            <person name="Pearce A.V."/>
            <person name="Peck A.I."/>
            <person name="Porter K.M."/>
            <person name="Pandian R."/>
            <person name="Pelan S."/>
            <person name="Phillimore B."/>
            <person name="Povey S."/>
            <person name="Ramsey Y."/>
            <person name="Rand V."/>
            <person name="Scharfe M."/>
            <person name="Sehra H.K."/>
            <person name="Shownkeen R."/>
            <person name="Sims S.K."/>
            <person name="Skuce C.D."/>
            <person name="Smith M."/>
            <person name="Steward C.A."/>
            <person name="Swarbreck D."/>
            <person name="Sycamore N."/>
            <person name="Tester J."/>
            <person name="Thorpe A."/>
            <person name="Tracey A."/>
            <person name="Tromans A."/>
            <person name="Thomas D.W."/>
            <person name="Wall M."/>
            <person name="Wallis J.M."/>
            <person name="West A.P."/>
            <person name="Whitehead S.L."/>
            <person name="Willey D.L."/>
            <person name="Williams S.A."/>
            <person name="Wilming L."/>
            <person name="Wray P.W."/>
            <person name="Young L."/>
            <person name="Ashurst J.L."/>
            <person name="Coulson A."/>
            <person name="Blocker H."/>
            <person name="Durbin R.M."/>
            <person name="Sulston J.E."/>
            <person name="Hubbard T."/>
            <person name="Jackson M.J."/>
            <person name="Bentley D.R."/>
            <person name="Beck S."/>
            <person name="Rogers J."/>
            <person name="Dunham I."/>
        </authorList>
    </citation>
    <scope>NUCLEOTIDE SEQUENCE [LARGE SCALE GENOMIC DNA]</scope>
</reference>
<reference key="3">
    <citation type="journal article" date="2004" name="Genome Res.">
        <title>The status, quality, and expansion of the NIH full-length cDNA project: the Mammalian Gene Collection (MGC).</title>
        <authorList>
            <consortium name="The MGC Project Team"/>
        </authorList>
    </citation>
    <scope>NUCLEOTIDE SEQUENCE [LARGE SCALE MRNA] (ISOFORMS 2 AND 3)</scope>
    <source>
        <tissue>Brain</tissue>
        <tissue>Muscle</tissue>
    </source>
</reference>
<reference evidence="10 11 12" key="4">
    <citation type="journal article" date="2004" name="J. Biol. Chem.">
        <title>Crystal structure of human kynurenine aminotransferase I.</title>
        <authorList>
            <person name="Rossi F."/>
            <person name="Han Q."/>
            <person name="Li J."/>
            <person name="Li J."/>
            <person name="Rizzi M."/>
        </authorList>
    </citation>
    <scope>X-RAY CRYSTALLOGRAPHY (2.0 ANGSTROMS) IN COMPLEX WITH PYRIDOXAL PHOSPHATE AND PHENYLALANINE</scope>
    <scope>SUBUNIT</scope>
    <scope>COFACTOR</scope>
</reference>
<reference evidence="13 14 15" key="5">
    <citation type="journal article" date="2009" name="J. Med. Chem.">
        <title>Structural insight into the inhibition of human kynurenine aminotransferase I/glutamine transaminase K.</title>
        <authorList>
            <person name="Han Q."/>
            <person name="Robinson H."/>
            <person name="Cai T."/>
            <person name="Tagle D.A."/>
            <person name="Li J."/>
        </authorList>
    </citation>
    <scope>X-RAY CRYSTALLOGRAPHY (1.5 ANGSTROMS) IN COMPLEX WITH THE INHIBITORS INDOLEACETIC ACID AND TRIS</scope>
    <scope>FUNCTION</scope>
    <scope>CATALYTIC ACTIVITY</scope>
    <scope>ACTIVITY REGULATION</scope>
    <scope>PATHWAY</scope>
    <scope>SUBUNIT</scope>
</reference>
<reference evidence="16 17" key="6">
    <citation type="journal article" date="2017" name="Protein Sci.">
        <title>High resolution crystal structures of human kynurenine aminotransferase-I bound to PLP cofactor, and in complex with aminooxyacetate.</title>
        <authorList>
            <person name="Nadvi N.A."/>
            <person name="Salam N.K."/>
            <person name="Park J."/>
            <person name="Akladios F.N."/>
            <person name="Kapoor V."/>
            <person name="Collyer C.A."/>
            <person name="Gorrell M.D."/>
            <person name="Church W.B."/>
        </authorList>
    </citation>
    <scope>X-RAY CRYSTALLOGRAPHY (1.28 ANGSTROMS)IN COMPLEX WITH INHIBITORS</scope>
    <scope>FUNCTION</scope>
    <scope>CATALYTIC ACTIVITY</scope>
    <scope>PATHWAY</scope>
    <scope>SUBUNIT</scope>
</reference>
<gene>
    <name evidence="9" type="primary">KYAT1</name>
    <name type="synonym">CCBL1</name>
</gene>
<sequence length="422" mass="47875">MAKQLQARRLDGIDYNPWVEFVKLASEHDVVNLGQGFPDFPPPDFAVEAFQHAVSGDFMLNQYTKTFGYPPLTKILASFFGELLGQEIDPLRNVLVTVGGYGALFTAFQALVDEGDEVIIIEPFFDCYEPMTMMAGGRPVFVSLKPGPIQNGELGSSSNWQLDPMELAGKFTSRTKALVLNTPNNPLGKVFSREELELVASLCQQHDVVCITDEVYQWMVYDGHQHISIASLPGMWERTLTIGSAGKTFSATGWKVGWVLGPDHIMKHLRTVHQNSVFHCPTQSQAAVAESFEREQLLFRQPSSYFVQFPQAMQRCRDHMIRSLQSVGLKPIIPQGSYFLITDISDFKRKMPDLPGAVDEPYDRRFVKWMIKNKGLVAIPVSIFYSVPHQKHFDHYIRFCFVKDEATLQAMDEKLRKWKVEL</sequence>
<keyword id="KW-0002">3D-structure</keyword>
<keyword id="KW-0025">Alternative splicing</keyword>
<keyword id="KW-0032">Aminotransferase</keyword>
<keyword id="KW-0963">Cytoplasm</keyword>
<keyword id="KW-0456">Lyase</keyword>
<keyword id="KW-1267">Proteomics identification</keyword>
<keyword id="KW-0663">Pyridoxal phosphate</keyword>
<keyword id="KW-1185">Reference proteome</keyword>
<keyword id="KW-0808">Transferase</keyword>
<dbReference type="EC" id="2.6.1.7" evidence="2 3"/>
<dbReference type="EC" id="4.4.1.13" evidence="4"/>
<dbReference type="EC" id="2.6.1.64" evidence="4"/>
<dbReference type="EMBL" id="X82224">
    <property type="protein sequence ID" value="CAA57702.1"/>
    <property type="molecule type" value="mRNA"/>
</dbReference>
<dbReference type="EMBL" id="AL441992">
    <property type="status" value="NOT_ANNOTATED_CDS"/>
    <property type="molecule type" value="Genomic_DNA"/>
</dbReference>
<dbReference type="EMBL" id="BC021262">
    <property type="protein sequence ID" value="AAH21262.1"/>
    <property type="molecule type" value="mRNA"/>
</dbReference>
<dbReference type="EMBL" id="BC033685">
    <property type="protein sequence ID" value="AAH33685.1"/>
    <property type="molecule type" value="mRNA"/>
</dbReference>
<dbReference type="CCDS" id="CCDS43884.1">
    <molecule id="Q16773-1"/>
</dbReference>
<dbReference type="CCDS" id="CCDS48038.1">
    <molecule id="Q16773-2"/>
</dbReference>
<dbReference type="PIR" id="S69001">
    <property type="entry name" value="S52790"/>
</dbReference>
<dbReference type="RefSeq" id="NP_001116143.1">
    <molecule id="Q16773-1"/>
    <property type="nucleotide sequence ID" value="NM_001122671.2"/>
</dbReference>
<dbReference type="RefSeq" id="NP_001116144.1">
    <molecule id="Q16773-2"/>
    <property type="nucleotide sequence ID" value="NM_001122672.2"/>
</dbReference>
<dbReference type="RefSeq" id="NP_001339917.1">
    <molecule id="Q16773-1"/>
    <property type="nucleotide sequence ID" value="NM_001352988.2"/>
</dbReference>
<dbReference type="RefSeq" id="NP_001339918.1">
    <molecule id="Q16773-1"/>
    <property type="nucleotide sequence ID" value="NM_001352989.2"/>
</dbReference>
<dbReference type="RefSeq" id="NP_001339919.1">
    <molecule id="Q16773-1"/>
    <property type="nucleotide sequence ID" value="NM_001352990.2"/>
</dbReference>
<dbReference type="RefSeq" id="NP_001339920.1">
    <molecule id="Q16773-1"/>
    <property type="nucleotide sequence ID" value="NM_001352991.2"/>
</dbReference>
<dbReference type="RefSeq" id="NP_001339921.1">
    <molecule id="Q16773-1"/>
    <property type="nucleotide sequence ID" value="NM_001352992.2"/>
</dbReference>
<dbReference type="RefSeq" id="NP_001339922.1">
    <molecule id="Q16773-1"/>
    <property type="nucleotide sequence ID" value="NM_001352993.2"/>
</dbReference>
<dbReference type="RefSeq" id="NP_004050.3">
    <molecule id="Q16773-1"/>
    <property type="nucleotide sequence ID" value="NM_004059.4"/>
</dbReference>
<dbReference type="RefSeq" id="XP_011517470.1">
    <property type="nucleotide sequence ID" value="XM_011519168.1"/>
</dbReference>
<dbReference type="RefSeq" id="XP_011517471.1">
    <property type="nucleotide sequence ID" value="XM_011519169.1"/>
</dbReference>
<dbReference type="RefSeq" id="XP_011517472.1">
    <property type="nucleotide sequence ID" value="XM_011519170.2"/>
</dbReference>
<dbReference type="RefSeq" id="XP_016870754.1">
    <property type="nucleotide sequence ID" value="XM_017015265.1"/>
</dbReference>
<dbReference type="RefSeq" id="XP_016870755.1">
    <property type="nucleotide sequence ID" value="XM_017015266.1"/>
</dbReference>
<dbReference type="RefSeq" id="XP_016870756.1">
    <property type="nucleotide sequence ID" value="XM_017015267.1"/>
</dbReference>
<dbReference type="RefSeq" id="XP_016870757.1">
    <property type="nucleotide sequence ID" value="XM_017015268.1"/>
</dbReference>
<dbReference type="PDB" id="1W7L">
    <property type="method" value="X-ray"/>
    <property type="resolution" value="2.00 A"/>
    <property type="chains" value="A=1-422"/>
</dbReference>
<dbReference type="PDB" id="1W7M">
    <property type="method" value="X-ray"/>
    <property type="resolution" value="2.70 A"/>
    <property type="chains" value="A=1-422"/>
</dbReference>
<dbReference type="PDB" id="1W7N">
    <property type="method" value="X-ray"/>
    <property type="resolution" value="2.90 A"/>
    <property type="chains" value="A=1-422"/>
</dbReference>
<dbReference type="PDB" id="3FVS">
    <property type="method" value="X-ray"/>
    <property type="resolution" value="1.50 A"/>
    <property type="chains" value="A/B=1-422"/>
</dbReference>
<dbReference type="PDB" id="3FVU">
    <property type="method" value="X-ray"/>
    <property type="resolution" value="1.55 A"/>
    <property type="chains" value="A/B=1-422"/>
</dbReference>
<dbReference type="PDB" id="3FVX">
    <property type="method" value="X-ray"/>
    <property type="resolution" value="1.50 A"/>
    <property type="chains" value="A/B=1-422"/>
</dbReference>
<dbReference type="PDB" id="4WLH">
    <property type="method" value="X-ray"/>
    <property type="resolution" value="1.28 A"/>
    <property type="chains" value="A/B=1-422"/>
</dbReference>
<dbReference type="PDB" id="4WLJ">
    <property type="method" value="X-ray"/>
    <property type="resolution" value="1.54 A"/>
    <property type="chains" value="A/B=1-422"/>
</dbReference>
<dbReference type="PDB" id="4WP0">
    <property type="method" value="X-ray"/>
    <property type="resolution" value="3.00 A"/>
    <property type="chains" value="A/B/C/D=1-422"/>
</dbReference>
<dbReference type="PDBsum" id="1W7L"/>
<dbReference type="PDBsum" id="1W7M"/>
<dbReference type="PDBsum" id="1W7N"/>
<dbReference type="PDBsum" id="3FVS"/>
<dbReference type="PDBsum" id="3FVU"/>
<dbReference type="PDBsum" id="3FVX"/>
<dbReference type="PDBsum" id="4WLH"/>
<dbReference type="PDBsum" id="4WLJ"/>
<dbReference type="PDBsum" id="4WP0"/>
<dbReference type="SMR" id="Q16773"/>
<dbReference type="BioGRID" id="107326">
    <property type="interactions" value="19"/>
</dbReference>
<dbReference type="FunCoup" id="Q16773">
    <property type="interactions" value="888"/>
</dbReference>
<dbReference type="IntAct" id="Q16773">
    <property type="interactions" value="11"/>
</dbReference>
<dbReference type="STRING" id="9606.ENSP00000399415"/>
<dbReference type="BindingDB" id="Q16773"/>
<dbReference type="ChEMBL" id="CHEMBL3962"/>
<dbReference type="DrugBank" id="DB02556">
    <property type="generic name" value="D-Phenylalanine"/>
</dbReference>
<dbReference type="DrugBank" id="DB07950">
    <property type="generic name" value="Indoleacetic acid"/>
</dbReference>
<dbReference type="DrugBank" id="DB00130">
    <property type="generic name" value="L-Glutamine"/>
</dbReference>
<dbReference type="DrugBank" id="DB04083">
    <property type="generic name" value="N(6)-(pyridoxal phosphate)-L-lysine"/>
</dbReference>
<dbReference type="DrugBank" id="DB00114">
    <property type="generic name" value="Pyridoxal phosphate"/>
</dbReference>
<dbReference type="DrugBank" id="DB02142">
    <property type="generic name" value="Pyridoxamine-5'-Phosphate"/>
</dbReference>
<dbReference type="iPTMnet" id="Q16773"/>
<dbReference type="PhosphoSitePlus" id="Q16773"/>
<dbReference type="BioMuta" id="KYAT1"/>
<dbReference type="DMDM" id="46396284"/>
<dbReference type="jPOST" id="Q16773"/>
<dbReference type="MassIVE" id="Q16773"/>
<dbReference type="PaxDb" id="9606-ENSP00000399415"/>
<dbReference type="PeptideAtlas" id="Q16773"/>
<dbReference type="ProteomicsDB" id="61059">
    <molecule id="Q16773-1"/>
</dbReference>
<dbReference type="ProteomicsDB" id="61060">
    <molecule id="Q16773-2"/>
</dbReference>
<dbReference type="ProteomicsDB" id="61061">
    <molecule id="Q16773-3"/>
</dbReference>
<dbReference type="Pumba" id="Q16773"/>
<dbReference type="Antibodypedia" id="7803">
    <property type="antibodies" value="237 antibodies from 28 providers"/>
</dbReference>
<dbReference type="DNASU" id="883"/>
<dbReference type="Ensembl" id="ENST00000302586.8">
    <molecule id="Q16773-1"/>
    <property type="protein sequence ID" value="ENSP00000302227.3"/>
    <property type="gene ID" value="ENSG00000171097.14"/>
</dbReference>
<dbReference type="Ensembl" id="ENST00000320665.10">
    <molecule id="Q16773-2"/>
    <property type="protein sequence ID" value="ENSP00000317342.6"/>
    <property type="gene ID" value="ENSG00000171097.14"/>
</dbReference>
<dbReference type="GeneID" id="883"/>
<dbReference type="KEGG" id="hsa:883"/>
<dbReference type="MANE-Select" id="ENST00000302586.8">
    <property type="protein sequence ID" value="ENSP00000302227.3"/>
    <property type="RefSeq nucleotide sequence ID" value="NM_004059.5"/>
    <property type="RefSeq protein sequence ID" value="NP_004050.3"/>
</dbReference>
<dbReference type="UCSC" id="uc004bwh.5">
    <molecule id="Q16773-1"/>
    <property type="organism name" value="human"/>
</dbReference>
<dbReference type="AGR" id="HGNC:1564"/>
<dbReference type="CTD" id="883"/>
<dbReference type="DisGeNET" id="883"/>
<dbReference type="GeneCards" id="KYAT1"/>
<dbReference type="HGNC" id="HGNC:1564">
    <property type="gene designation" value="KYAT1"/>
</dbReference>
<dbReference type="HPA" id="ENSG00000171097">
    <property type="expression patterns" value="Low tissue specificity"/>
</dbReference>
<dbReference type="MIM" id="600547">
    <property type="type" value="gene"/>
</dbReference>
<dbReference type="neXtProt" id="NX_Q16773"/>
<dbReference type="OpenTargets" id="ENSG00000171097"/>
<dbReference type="PharmGKB" id="PA26138"/>
<dbReference type="VEuPathDB" id="HostDB:ENSG00000171097"/>
<dbReference type="eggNOG" id="KOG0257">
    <property type="taxonomic scope" value="Eukaryota"/>
</dbReference>
<dbReference type="GeneTree" id="ENSGT00940000158797"/>
<dbReference type="HOGENOM" id="CLU_017584_4_0_1"/>
<dbReference type="InParanoid" id="Q16773"/>
<dbReference type="OrthoDB" id="2414662at2759"/>
<dbReference type="PAN-GO" id="Q16773">
    <property type="GO annotations" value="3 GO annotations based on evolutionary models"/>
</dbReference>
<dbReference type="PhylomeDB" id="Q16773"/>
<dbReference type="TreeFam" id="TF105482"/>
<dbReference type="BioCyc" id="MetaCyc:HS10240-MONOMER"/>
<dbReference type="BRENDA" id="2.6.1.7">
    <property type="organism ID" value="2681"/>
</dbReference>
<dbReference type="PathwayCommons" id="Q16773"/>
<dbReference type="Reactome" id="R-HSA-71240">
    <property type="pathway name" value="Tryptophan catabolism"/>
</dbReference>
<dbReference type="Reactome" id="R-HSA-8964208">
    <property type="pathway name" value="Phenylalanine metabolism"/>
</dbReference>
<dbReference type="Reactome" id="R-HSA-8964539">
    <property type="pathway name" value="Glutamate and glutamine metabolism"/>
</dbReference>
<dbReference type="SignaLink" id="Q16773"/>
<dbReference type="UniPathway" id="UPA00334">
    <property type="reaction ID" value="UER00726"/>
</dbReference>
<dbReference type="BioGRID-ORCS" id="883">
    <property type="hits" value="16 hits in 1159 CRISPR screens"/>
</dbReference>
<dbReference type="ChiTaRS" id="KYAT1">
    <property type="organism name" value="human"/>
</dbReference>
<dbReference type="EvolutionaryTrace" id="Q16773"/>
<dbReference type="GeneWiki" id="CCBL1"/>
<dbReference type="GenomeRNAi" id="883"/>
<dbReference type="Pharos" id="Q16773">
    <property type="development level" value="Tbio"/>
</dbReference>
<dbReference type="PRO" id="PR:Q16773"/>
<dbReference type="Proteomes" id="UP000005640">
    <property type="component" value="Chromosome 9"/>
</dbReference>
<dbReference type="RNAct" id="Q16773">
    <property type="molecule type" value="protein"/>
</dbReference>
<dbReference type="Bgee" id="ENSG00000171097">
    <property type="expression patterns" value="Expressed in right hemisphere of cerebellum and 97 other cell types or tissues"/>
</dbReference>
<dbReference type="ExpressionAtlas" id="Q16773">
    <property type="expression patterns" value="baseline and differential"/>
</dbReference>
<dbReference type="GO" id="GO:0005737">
    <property type="term" value="C:cytoplasm"/>
    <property type="evidence" value="ECO:0000318"/>
    <property type="project" value="GO_Central"/>
</dbReference>
<dbReference type="GO" id="GO:0005829">
    <property type="term" value="C:cytosol"/>
    <property type="evidence" value="ECO:0000304"/>
    <property type="project" value="Reactome"/>
</dbReference>
<dbReference type="GO" id="GO:0005739">
    <property type="term" value="C:mitochondrion"/>
    <property type="evidence" value="ECO:0006056"/>
    <property type="project" value="FlyBase"/>
</dbReference>
<dbReference type="GO" id="GO:0047804">
    <property type="term" value="F:cysteine-S-conjugate beta-lyase activity"/>
    <property type="evidence" value="ECO:0000314"/>
    <property type="project" value="FlyBase"/>
</dbReference>
<dbReference type="GO" id="GO:0047316">
    <property type="term" value="F:glutamine-phenylpyruvate transaminase activity"/>
    <property type="evidence" value="ECO:0007669"/>
    <property type="project" value="UniProtKB-EC"/>
</dbReference>
<dbReference type="GO" id="GO:0016212">
    <property type="term" value="F:kynurenine-oxoglutarate transaminase activity"/>
    <property type="evidence" value="ECO:0000314"/>
    <property type="project" value="UniProtKB"/>
</dbReference>
<dbReference type="GO" id="GO:0042803">
    <property type="term" value="F:protein homodimerization activity"/>
    <property type="evidence" value="ECO:0000353"/>
    <property type="project" value="UniProtKB"/>
</dbReference>
<dbReference type="GO" id="GO:0030170">
    <property type="term" value="F:pyridoxal phosphate binding"/>
    <property type="evidence" value="ECO:0007669"/>
    <property type="project" value="InterPro"/>
</dbReference>
<dbReference type="GO" id="GO:0009058">
    <property type="term" value="P:biosynthetic process"/>
    <property type="evidence" value="ECO:0007669"/>
    <property type="project" value="InterPro"/>
</dbReference>
<dbReference type="GO" id="GO:0070189">
    <property type="term" value="P:kynurenine metabolic process"/>
    <property type="evidence" value="ECO:0000314"/>
    <property type="project" value="UniProtKB"/>
</dbReference>
<dbReference type="GO" id="GO:0097053">
    <property type="term" value="P:L-kynurenine catabolic process"/>
    <property type="evidence" value="ECO:0007669"/>
    <property type="project" value="UniProtKB-UniPathway"/>
</dbReference>
<dbReference type="GO" id="GO:0009617">
    <property type="term" value="P:response to bacterium"/>
    <property type="evidence" value="ECO:0007669"/>
    <property type="project" value="Ensembl"/>
</dbReference>
<dbReference type="CDD" id="cd00609">
    <property type="entry name" value="AAT_like"/>
    <property type="match status" value="1"/>
</dbReference>
<dbReference type="FunFam" id="3.40.640.10:FF:000264">
    <property type="entry name" value="Kynurenine--oxoglutarate transaminase 1"/>
    <property type="match status" value="1"/>
</dbReference>
<dbReference type="FunFam" id="3.90.1150.10:FF:000141">
    <property type="entry name" value="Kynurenine--oxoglutarate transaminase 1"/>
    <property type="match status" value="2"/>
</dbReference>
<dbReference type="Gene3D" id="3.90.1150.10">
    <property type="entry name" value="Aspartate Aminotransferase, domain 1"/>
    <property type="match status" value="1"/>
</dbReference>
<dbReference type="Gene3D" id="3.40.640.10">
    <property type="entry name" value="Type I PLP-dependent aspartate aminotransferase-like (Major domain)"/>
    <property type="match status" value="1"/>
</dbReference>
<dbReference type="InterPro" id="IPR004839">
    <property type="entry name" value="Aminotransferase_I/II_large"/>
</dbReference>
<dbReference type="InterPro" id="IPR051326">
    <property type="entry name" value="Kynurenine-oxoglutarate_AT"/>
</dbReference>
<dbReference type="InterPro" id="IPR015424">
    <property type="entry name" value="PyrdxlP-dep_Trfase"/>
</dbReference>
<dbReference type="InterPro" id="IPR015421">
    <property type="entry name" value="PyrdxlP-dep_Trfase_major"/>
</dbReference>
<dbReference type="InterPro" id="IPR015422">
    <property type="entry name" value="PyrdxlP-dep_Trfase_small"/>
</dbReference>
<dbReference type="PANTHER" id="PTHR43807">
    <property type="entry name" value="FI04487P"/>
    <property type="match status" value="1"/>
</dbReference>
<dbReference type="PANTHER" id="PTHR43807:SF14">
    <property type="entry name" value="KYNURENINE--OXOGLUTARATE TRANSAMINASE 1"/>
    <property type="match status" value="1"/>
</dbReference>
<dbReference type="Pfam" id="PF00155">
    <property type="entry name" value="Aminotran_1_2"/>
    <property type="match status" value="1"/>
</dbReference>
<dbReference type="SUPFAM" id="SSF53383">
    <property type="entry name" value="PLP-dependent transferases"/>
    <property type="match status" value="1"/>
</dbReference>
<organism>
    <name type="scientific">Homo sapiens</name>
    <name type="common">Human</name>
    <dbReference type="NCBI Taxonomy" id="9606"/>
    <lineage>
        <taxon>Eukaryota</taxon>
        <taxon>Metazoa</taxon>
        <taxon>Chordata</taxon>
        <taxon>Craniata</taxon>
        <taxon>Vertebrata</taxon>
        <taxon>Euteleostomi</taxon>
        <taxon>Mammalia</taxon>
        <taxon>Eutheria</taxon>
        <taxon>Euarchontoglires</taxon>
        <taxon>Primates</taxon>
        <taxon>Haplorrhini</taxon>
        <taxon>Catarrhini</taxon>
        <taxon>Hominidae</taxon>
        <taxon>Homo</taxon>
    </lineage>
</organism>
<protein>
    <recommendedName>
        <fullName evidence="7">Kynurenine--oxoglutarate transaminase 1</fullName>
        <ecNumber evidence="2 3">2.6.1.7</ecNumber>
    </recommendedName>
    <alternativeName>
        <fullName evidence="8">Cysteine-S-conjugate beta-lyase</fullName>
        <ecNumber evidence="4">4.4.1.13</ecNumber>
    </alternativeName>
    <alternativeName>
        <fullName>Glutamine transaminase K</fullName>
        <shortName>GTK</shortName>
    </alternativeName>
    <alternativeName>
        <fullName evidence="8">Glutamine--phenylpyruvate transaminase</fullName>
        <ecNumber evidence="4">2.6.1.64</ecNumber>
    </alternativeName>
    <alternativeName>
        <fullName evidence="9">Kynurenine aminotransferase 1</fullName>
    </alternativeName>
    <alternativeName>
        <fullName>Kynurenine aminotransferase I</fullName>
        <shortName>KATI</shortName>
    </alternativeName>
    <alternativeName>
        <fullName>Kynurenine--oxoglutarate transaminase I</fullName>
    </alternativeName>
</protein>
<accession>Q16773</accession>
<accession>Q5T275</accession>
<accession>Q8N191</accession>
<proteinExistence type="evidence at protein level"/>
<evidence type="ECO:0000269" key="1">
    <source>
    </source>
</evidence>
<evidence type="ECO:0000269" key="2">
    <source>
    </source>
</evidence>
<evidence type="ECO:0000269" key="3">
    <source>
    </source>
</evidence>
<evidence type="ECO:0000269" key="4">
    <source>
    </source>
</evidence>
<evidence type="ECO:0000303" key="5">
    <source>
    </source>
</evidence>
<evidence type="ECO:0000305" key="6"/>
<evidence type="ECO:0000305" key="7">
    <source>
    </source>
</evidence>
<evidence type="ECO:0000305" key="8">
    <source>
    </source>
</evidence>
<evidence type="ECO:0000312" key="9">
    <source>
        <dbReference type="HGNC" id="HGNC:1564"/>
    </source>
</evidence>
<evidence type="ECO:0007744" key="10">
    <source>
        <dbReference type="PDB" id="1W7L"/>
    </source>
</evidence>
<evidence type="ECO:0007744" key="11">
    <source>
        <dbReference type="PDB" id="1W7M"/>
    </source>
</evidence>
<evidence type="ECO:0007744" key="12">
    <source>
        <dbReference type="PDB" id="1W7N"/>
    </source>
</evidence>
<evidence type="ECO:0007744" key="13">
    <source>
        <dbReference type="PDB" id="3FVS"/>
    </source>
</evidence>
<evidence type="ECO:0007744" key="14">
    <source>
        <dbReference type="PDB" id="3FVU"/>
    </source>
</evidence>
<evidence type="ECO:0007744" key="15">
    <source>
        <dbReference type="PDB" id="3FVX"/>
    </source>
</evidence>
<evidence type="ECO:0007744" key="16">
    <source>
        <dbReference type="PDB" id="4WLH"/>
    </source>
</evidence>
<evidence type="ECO:0007744" key="17">
    <source>
        <dbReference type="PDB" id="4WLJ"/>
    </source>
</evidence>
<evidence type="ECO:0007829" key="18">
    <source>
        <dbReference type="PDB" id="1W7L"/>
    </source>
</evidence>
<evidence type="ECO:0007829" key="19">
    <source>
        <dbReference type="PDB" id="3FVS"/>
    </source>
</evidence>
<evidence type="ECO:0007829" key="20">
    <source>
        <dbReference type="PDB" id="4WLH"/>
    </source>
</evidence>
<evidence type="ECO:0007829" key="21">
    <source>
        <dbReference type="PDB" id="4WLJ"/>
    </source>
</evidence>
<name>KAT1_HUMAN</name>